<dbReference type="EMBL" id="CR382139">
    <property type="protein sequence ID" value="CAG90458.1"/>
    <property type="molecule type" value="Genomic_DNA"/>
</dbReference>
<dbReference type="RefSeq" id="XP_461986.1">
    <property type="nucleotide sequence ID" value="XM_461986.1"/>
</dbReference>
<dbReference type="SMR" id="Q6BII5"/>
<dbReference type="FunCoup" id="Q6BII5">
    <property type="interactions" value="1036"/>
</dbReference>
<dbReference type="STRING" id="284592.Q6BII5"/>
<dbReference type="GeneID" id="2904881"/>
<dbReference type="KEGG" id="dha:DEHA2G10120g"/>
<dbReference type="VEuPathDB" id="FungiDB:DEHA2G10120g"/>
<dbReference type="eggNOG" id="KOG3034">
    <property type="taxonomic scope" value="Eukaryota"/>
</dbReference>
<dbReference type="HOGENOM" id="CLU_068770_2_0_1"/>
<dbReference type="InParanoid" id="Q6BII5"/>
<dbReference type="OMA" id="VKFYRKE"/>
<dbReference type="OrthoDB" id="27543at2759"/>
<dbReference type="Proteomes" id="UP000000599">
    <property type="component" value="Chromosome G"/>
</dbReference>
<dbReference type="GO" id="GO:0005737">
    <property type="term" value="C:cytoplasm"/>
    <property type="evidence" value="ECO:0007669"/>
    <property type="project" value="UniProtKB-SubCell"/>
</dbReference>
<dbReference type="GO" id="GO:0005634">
    <property type="term" value="C:nucleus"/>
    <property type="evidence" value="ECO:0007669"/>
    <property type="project" value="UniProtKB-SubCell"/>
</dbReference>
<dbReference type="GO" id="GO:0015031">
    <property type="term" value="P:protein transport"/>
    <property type="evidence" value="ECO:0007669"/>
    <property type="project" value="UniProtKB-KW"/>
</dbReference>
<dbReference type="InterPro" id="IPR025602">
    <property type="entry name" value="BCP1_family"/>
</dbReference>
<dbReference type="PANTHER" id="PTHR13261">
    <property type="entry name" value="BRCA2 AND CDKN1A INTERACTING PROTEIN"/>
    <property type="match status" value="1"/>
</dbReference>
<dbReference type="PANTHER" id="PTHR13261:SF0">
    <property type="entry name" value="BRCA2 AND CDKN1A-INTERACTING PROTEIN"/>
    <property type="match status" value="1"/>
</dbReference>
<dbReference type="Pfam" id="PF13862">
    <property type="entry name" value="BCCIP"/>
    <property type="match status" value="1"/>
</dbReference>
<dbReference type="PIRSF" id="PIRSF028983">
    <property type="entry name" value="BCP1"/>
    <property type="match status" value="1"/>
</dbReference>
<protein>
    <recommendedName>
        <fullName>Protein BCP1</fullName>
    </recommendedName>
</protein>
<gene>
    <name type="primary">BCP1</name>
    <name type="ordered locus">DEHA2G10120g</name>
</gene>
<accession>Q6BII5</accession>
<feature type="chain" id="PRO_0000249701" description="Protein BCP1">
    <location>
        <begin position="1"/>
        <end position="307"/>
    </location>
</feature>
<feature type="region of interest" description="Disordered" evidence="3">
    <location>
        <begin position="1"/>
        <end position="36"/>
    </location>
</feature>
<feature type="compositionally biased region" description="Acidic residues" evidence="3">
    <location>
        <begin position="21"/>
        <end position="36"/>
    </location>
</feature>
<sequence>MAKRRADEPEDSDIDVSSTDSENELEDEQQQGEEGEDIINVDFDYFDLNPDVDFHAIKNFLRQLFGDDATTFDVSSLADLILTKNSVGTTIKTEGMESDPFAILSVINMTENINKPCLKTVVDYVLQKTSKNLEFNLMLRKLLEAKDQKATSSSKSLKVGLIISERMINMPVEVVPPMYKMLLEEMTKAEDAHEKYEFDYFLVISKVYKLVSAKVQDAEAPQKSKKKKVATNEPVPVEMDYFHYEDMVLEENAKYFATYDYNEARQDTDSRRVFTDYGIDPKLSLILIDKNKLAESIPQMEEKFPPF</sequence>
<organism>
    <name type="scientific">Debaryomyces hansenii (strain ATCC 36239 / CBS 767 / BCRC 21394 / JCM 1990 / NBRC 0083 / IGC 2968)</name>
    <name type="common">Yeast</name>
    <name type="synonym">Torulaspora hansenii</name>
    <dbReference type="NCBI Taxonomy" id="284592"/>
    <lineage>
        <taxon>Eukaryota</taxon>
        <taxon>Fungi</taxon>
        <taxon>Dikarya</taxon>
        <taxon>Ascomycota</taxon>
        <taxon>Saccharomycotina</taxon>
        <taxon>Pichiomycetes</taxon>
        <taxon>Debaryomycetaceae</taxon>
        <taxon>Debaryomyces</taxon>
    </lineage>
</organism>
<keyword id="KW-0963">Cytoplasm</keyword>
<keyword id="KW-0539">Nucleus</keyword>
<keyword id="KW-0653">Protein transport</keyword>
<keyword id="KW-1185">Reference proteome</keyword>
<keyword id="KW-0813">Transport</keyword>
<reference key="1">
    <citation type="journal article" date="2004" name="Nature">
        <title>Genome evolution in yeasts.</title>
        <authorList>
            <person name="Dujon B."/>
            <person name="Sherman D."/>
            <person name="Fischer G."/>
            <person name="Durrens P."/>
            <person name="Casaregola S."/>
            <person name="Lafontaine I."/>
            <person name="de Montigny J."/>
            <person name="Marck C."/>
            <person name="Neuveglise C."/>
            <person name="Talla E."/>
            <person name="Goffard N."/>
            <person name="Frangeul L."/>
            <person name="Aigle M."/>
            <person name="Anthouard V."/>
            <person name="Babour A."/>
            <person name="Barbe V."/>
            <person name="Barnay S."/>
            <person name="Blanchin S."/>
            <person name="Beckerich J.-M."/>
            <person name="Beyne E."/>
            <person name="Bleykasten C."/>
            <person name="Boisrame A."/>
            <person name="Boyer J."/>
            <person name="Cattolico L."/>
            <person name="Confanioleri F."/>
            <person name="de Daruvar A."/>
            <person name="Despons L."/>
            <person name="Fabre E."/>
            <person name="Fairhead C."/>
            <person name="Ferry-Dumazet H."/>
            <person name="Groppi A."/>
            <person name="Hantraye F."/>
            <person name="Hennequin C."/>
            <person name="Jauniaux N."/>
            <person name="Joyet P."/>
            <person name="Kachouri R."/>
            <person name="Kerrest A."/>
            <person name="Koszul R."/>
            <person name="Lemaire M."/>
            <person name="Lesur I."/>
            <person name="Ma L."/>
            <person name="Muller H."/>
            <person name="Nicaud J.-M."/>
            <person name="Nikolski M."/>
            <person name="Oztas S."/>
            <person name="Ozier-Kalogeropoulos O."/>
            <person name="Pellenz S."/>
            <person name="Potier S."/>
            <person name="Richard G.-F."/>
            <person name="Straub M.-L."/>
            <person name="Suleau A."/>
            <person name="Swennen D."/>
            <person name="Tekaia F."/>
            <person name="Wesolowski-Louvel M."/>
            <person name="Westhof E."/>
            <person name="Wirth B."/>
            <person name="Zeniou-Meyer M."/>
            <person name="Zivanovic Y."/>
            <person name="Bolotin-Fukuhara M."/>
            <person name="Thierry A."/>
            <person name="Bouchier C."/>
            <person name="Caudron B."/>
            <person name="Scarpelli C."/>
            <person name="Gaillardin C."/>
            <person name="Weissenbach J."/>
            <person name="Wincker P."/>
            <person name="Souciet J.-L."/>
        </authorList>
    </citation>
    <scope>NUCLEOTIDE SEQUENCE [LARGE SCALE GENOMIC DNA]</scope>
    <source>
        <strain>ATCC 36239 / CBS 767 / BCRC 21394 / JCM 1990 / NBRC 0083 / IGC 2968</strain>
    </source>
</reference>
<proteinExistence type="inferred from homology"/>
<name>BCP1_DEBHA</name>
<comment type="function">
    <text evidence="1">Involved in nuclear export, actin cytoskeleton organization and vesicular transport.</text>
</comment>
<comment type="subcellular location">
    <subcellularLocation>
        <location evidence="2">Cytoplasm</location>
    </subcellularLocation>
    <subcellularLocation>
        <location evidence="2">Nucleus</location>
    </subcellularLocation>
</comment>
<comment type="similarity">
    <text evidence="4">Belongs to the BCP1 family.</text>
</comment>
<evidence type="ECO:0000250" key="1"/>
<evidence type="ECO:0000250" key="2">
    <source>
        <dbReference type="UniProtKB" id="Q06338"/>
    </source>
</evidence>
<evidence type="ECO:0000256" key="3">
    <source>
        <dbReference type="SAM" id="MobiDB-lite"/>
    </source>
</evidence>
<evidence type="ECO:0000305" key="4"/>